<dbReference type="EMBL" id="AF167166">
    <property type="protein sequence ID" value="AAF03686.1"/>
    <property type="molecule type" value="mRNA"/>
</dbReference>
<dbReference type="PIR" id="D59147">
    <property type="entry name" value="D59147"/>
</dbReference>
<dbReference type="ConoServer" id="1732">
    <property type="toxin name" value="Gm5.2 precursor"/>
</dbReference>
<dbReference type="GO" id="GO:0005576">
    <property type="term" value="C:extracellular region"/>
    <property type="evidence" value="ECO:0007669"/>
    <property type="project" value="UniProtKB-SubCell"/>
</dbReference>
<dbReference type="GO" id="GO:0090729">
    <property type="term" value="F:toxin activity"/>
    <property type="evidence" value="ECO:0007669"/>
    <property type="project" value="UniProtKB-KW"/>
</dbReference>
<dbReference type="InterPro" id="IPR031565">
    <property type="entry name" value="T-conotoxin"/>
</dbReference>
<dbReference type="Pfam" id="PF16981">
    <property type="entry name" value="Chi-conotoxin"/>
    <property type="match status" value="1"/>
</dbReference>
<evidence type="ECO:0000250" key="1"/>
<evidence type="ECO:0000255" key="2"/>
<evidence type="ECO:0000303" key="3">
    <source>
    </source>
</evidence>
<evidence type="ECO:0000305" key="4"/>
<evidence type="ECO:0000305" key="5">
    <source>
    </source>
</evidence>
<protein>
    <recommendedName>
        <fullName evidence="3">Conotoxin Gm5.2</fullName>
    </recommendedName>
</protein>
<accession>Q9U6Z8</accession>
<organism>
    <name type="scientific">Conus gloriamaris</name>
    <name type="common">Glory-of-the-Sea cone</name>
    <dbReference type="NCBI Taxonomy" id="37336"/>
    <lineage>
        <taxon>Eukaryota</taxon>
        <taxon>Metazoa</taxon>
        <taxon>Spiralia</taxon>
        <taxon>Lophotrochozoa</taxon>
        <taxon>Mollusca</taxon>
        <taxon>Gastropoda</taxon>
        <taxon>Caenogastropoda</taxon>
        <taxon>Neogastropoda</taxon>
        <taxon>Conoidea</taxon>
        <taxon>Conidae</taxon>
        <taxon>Conus</taxon>
        <taxon>Cylinder</taxon>
    </lineage>
</organism>
<feature type="signal peptide" evidence="2">
    <location>
        <begin position="1"/>
        <end position="22"/>
    </location>
</feature>
<feature type="propeptide" id="PRO_0000035023" evidence="1">
    <location>
        <begin position="23"/>
        <end position="49"/>
    </location>
</feature>
<feature type="peptide" id="PRO_0000035024" description="Conotoxin Gm5.2">
    <location>
        <begin position="50"/>
        <end position="60"/>
    </location>
</feature>
<feature type="modified residue" description="Serine amide" evidence="1">
    <location>
        <position position="60"/>
    </location>
</feature>
<comment type="subcellular location">
    <subcellularLocation>
        <location evidence="5">Secreted</location>
    </subcellularLocation>
</comment>
<comment type="tissue specificity">
    <text evidence="5">Expressed by the venom duct.</text>
</comment>
<comment type="domain">
    <text evidence="4">The cysteine framework is V (CC-CC).</text>
</comment>
<comment type="PTM">
    <text evidence="4">Contains 2 disulfide bonds that can be either 'C1-C3, C2-C4' or 'C1-C4, C2-C3', since these disulfide connectivities have been observed for conotoxins with cysteine framework V (for examples, see AC P0DQQ7 and AC P81755).</text>
</comment>
<comment type="similarity">
    <text evidence="4">Belongs to the conotoxin T superfamily.</text>
</comment>
<proteinExistence type="inferred from homology"/>
<keyword id="KW-0027">Amidation</keyword>
<keyword id="KW-0165">Cleavage on pair of basic residues</keyword>
<keyword id="KW-1015">Disulfide bond</keyword>
<keyword id="KW-0964">Secreted</keyword>
<keyword id="KW-0732">Signal</keyword>
<keyword id="KW-0800">Toxin</keyword>
<reference key="1">
    <citation type="journal article" date="1999" name="J. Biol. Chem.">
        <title>The T-superfamily of conotoxins.</title>
        <authorList>
            <person name="Walker C.S."/>
            <person name="Steel D."/>
            <person name="Jacobsen R.B."/>
            <person name="Lirazan M.B."/>
            <person name="Cruz L.J."/>
            <person name="Hooper D."/>
            <person name="Shetty R."/>
            <person name="DelaCruz R.C."/>
            <person name="Nielsen J.S."/>
            <person name="Zhou L.M."/>
            <person name="Bandyopadhyay P."/>
            <person name="Craig A.G."/>
            <person name="Olivera B.M."/>
        </authorList>
    </citation>
    <scope>NUCLEOTIDE SEQUENCE [MRNA]</scope>
    <source>
        <tissue>Venom duct</tissue>
    </source>
</reference>
<reference key="2">
    <citation type="journal article" date="1999" name="J. Biol. Chem.">
        <authorList>
            <person name="Walker C.S."/>
            <person name="Steel D."/>
            <person name="Jacobsen R.B."/>
            <person name="Lirazan M.B."/>
            <person name="Cruz L.J."/>
            <person name="Hooper D."/>
            <person name="Shetty R."/>
            <person name="DelaCruz R.C."/>
            <person name="Nielsen J.S."/>
            <person name="Zhou L.M."/>
            <person name="Bandyopadhyay P."/>
            <person name="Craig A.G."/>
            <person name="Olivera B.M."/>
        </authorList>
    </citation>
    <scope>ERRATUM OF PUBMED:10521453</scope>
</reference>
<sequence length="62" mass="6817">MRCLPVFVILLLLIASAPSVDAQPKTKDDVPLAPLHDNIRSTLQTLRKKVCCRPVQDCCSGK</sequence>
<name>CT52_CONGL</name>